<dbReference type="EMBL" id="AF076070">
    <property type="protein sequence ID" value="AAC68627.1"/>
    <property type="molecule type" value="Genomic_DNA"/>
</dbReference>
<dbReference type="SMR" id="O79216"/>
<dbReference type="GO" id="GO:0005743">
    <property type="term" value="C:mitochondrial inner membrane"/>
    <property type="evidence" value="ECO:0007669"/>
    <property type="project" value="UniProtKB-SubCell"/>
</dbReference>
<dbReference type="GO" id="GO:0045275">
    <property type="term" value="C:respiratory chain complex III"/>
    <property type="evidence" value="ECO:0007669"/>
    <property type="project" value="InterPro"/>
</dbReference>
<dbReference type="GO" id="GO:0046872">
    <property type="term" value="F:metal ion binding"/>
    <property type="evidence" value="ECO:0007669"/>
    <property type="project" value="UniProtKB-KW"/>
</dbReference>
<dbReference type="GO" id="GO:0008121">
    <property type="term" value="F:ubiquinol-cytochrome-c reductase activity"/>
    <property type="evidence" value="ECO:0007669"/>
    <property type="project" value="InterPro"/>
</dbReference>
<dbReference type="GO" id="GO:0006122">
    <property type="term" value="P:mitochondrial electron transport, ubiquinol to cytochrome c"/>
    <property type="evidence" value="ECO:0007669"/>
    <property type="project" value="TreeGrafter"/>
</dbReference>
<dbReference type="CDD" id="cd00290">
    <property type="entry name" value="cytochrome_b_C"/>
    <property type="match status" value="1"/>
</dbReference>
<dbReference type="CDD" id="cd00284">
    <property type="entry name" value="Cytochrome_b_N"/>
    <property type="match status" value="1"/>
</dbReference>
<dbReference type="FunFam" id="1.20.810.10:FF:000002">
    <property type="entry name" value="Cytochrome b"/>
    <property type="match status" value="1"/>
</dbReference>
<dbReference type="Gene3D" id="1.20.810.10">
    <property type="entry name" value="Cytochrome Bc1 Complex, Chain C"/>
    <property type="match status" value="1"/>
</dbReference>
<dbReference type="InterPro" id="IPR005798">
    <property type="entry name" value="Cyt_b/b6_C"/>
</dbReference>
<dbReference type="InterPro" id="IPR036150">
    <property type="entry name" value="Cyt_b/b6_C_sf"/>
</dbReference>
<dbReference type="InterPro" id="IPR005797">
    <property type="entry name" value="Cyt_b/b6_N"/>
</dbReference>
<dbReference type="InterPro" id="IPR027387">
    <property type="entry name" value="Cytb/b6-like_sf"/>
</dbReference>
<dbReference type="InterPro" id="IPR030689">
    <property type="entry name" value="Cytochrome_b"/>
</dbReference>
<dbReference type="InterPro" id="IPR048260">
    <property type="entry name" value="Cytochrome_b_C_euk/bac"/>
</dbReference>
<dbReference type="InterPro" id="IPR048259">
    <property type="entry name" value="Cytochrome_b_N_euk/bac"/>
</dbReference>
<dbReference type="InterPro" id="IPR016174">
    <property type="entry name" value="Di-haem_cyt_TM"/>
</dbReference>
<dbReference type="PANTHER" id="PTHR19271">
    <property type="entry name" value="CYTOCHROME B"/>
    <property type="match status" value="1"/>
</dbReference>
<dbReference type="PANTHER" id="PTHR19271:SF16">
    <property type="entry name" value="CYTOCHROME B"/>
    <property type="match status" value="1"/>
</dbReference>
<dbReference type="Pfam" id="PF00032">
    <property type="entry name" value="Cytochrom_B_C"/>
    <property type="match status" value="1"/>
</dbReference>
<dbReference type="Pfam" id="PF00033">
    <property type="entry name" value="Cytochrome_B"/>
    <property type="match status" value="1"/>
</dbReference>
<dbReference type="PIRSF" id="PIRSF038885">
    <property type="entry name" value="COB"/>
    <property type="match status" value="1"/>
</dbReference>
<dbReference type="SUPFAM" id="SSF81648">
    <property type="entry name" value="a domain/subunit of cytochrome bc1 complex (Ubiquinol-cytochrome c reductase)"/>
    <property type="match status" value="1"/>
</dbReference>
<dbReference type="SUPFAM" id="SSF81342">
    <property type="entry name" value="Transmembrane di-heme cytochromes"/>
    <property type="match status" value="1"/>
</dbReference>
<dbReference type="PROSITE" id="PS51003">
    <property type="entry name" value="CYTB_CTER"/>
    <property type="match status" value="1"/>
</dbReference>
<dbReference type="PROSITE" id="PS51002">
    <property type="entry name" value="CYTB_NTER"/>
    <property type="match status" value="1"/>
</dbReference>
<comment type="function">
    <text evidence="2">Component of the ubiquinol-cytochrome c reductase complex (complex III or cytochrome b-c1 complex) that is part of the mitochondrial respiratory chain. The b-c1 complex mediates electron transfer from ubiquinol to cytochrome c. Contributes to the generation of a proton gradient across the mitochondrial membrane that is then used for ATP synthesis.</text>
</comment>
<comment type="cofactor">
    <cofactor evidence="2">
        <name>heme b</name>
        <dbReference type="ChEBI" id="CHEBI:60344"/>
    </cofactor>
    <text evidence="2">Binds 2 heme b groups non-covalently.</text>
</comment>
<comment type="subunit">
    <text evidence="2">The cytochrome bc1 complex contains 11 subunits: 3 respiratory subunits (MT-CYB, CYC1 and UQCRFS1), 2 core proteins (UQCRC1 and UQCRC2) and 6 low-molecular weight proteins (UQCRH/QCR6, UQCRB/QCR7, UQCRQ/QCR8, UQCR10/QCR9, UQCR11/QCR10 and a cleavage product of UQCRFS1). This cytochrome bc1 complex then forms a dimer.</text>
</comment>
<comment type="subcellular location">
    <subcellularLocation>
        <location evidence="2">Mitochondrion inner membrane</location>
        <topology evidence="2">Multi-pass membrane protein</topology>
    </subcellularLocation>
</comment>
<comment type="miscellaneous">
    <text evidence="1">Heme 1 (or BL or b562) is low-potential and absorbs at about 562 nm, and heme 2 (or BH or b566) is high-potential and absorbs at about 566 nm.</text>
</comment>
<comment type="similarity">
    <text evidence="3 4">Belongs to the cytochrome b family.</text>
</comment>
<comment type="caution">
    <text evidence="2">The full-length protein contains only eight transmembrane helices, not nine as predicted by bioinformatics tools.</text>
</comment>
<feature type="chain" id="PRO_0000061337" description="Cytochrome b">
    <location>
        <begin position="1"/>
        <end position="380"/>
    </location>
</feature>
<feature type="transmembrane region" description="Helical" evidence="2">
    <location>
        <begin position="34"/>
        <end position="54"/>
    </location>
</feature>
<feature type="transmembrane region" description="Helical" evidence="2">
    <location>
        <begin position="78"/>
        <end position="99"/>
    </location>
</feature>
<feature type="transmembrane region" description="Helical" evidence="2">
    <location>
        <begin position="114"/>
        <end position="134"/>
    </location>
</feature>
<feature type="transmembrane region" description="Helical" evidence="2">
    <location>
        <begin position="179"/>
        <end position="199"/>
    </location>
</feature>
<feature type="transmembrane region" description="Helical" evidence="2">
    <location>
        <begin position="227"/>
        <end position="247"/>
    </location>
</feature>
<feature type="transmembrane region" description="Helical" evidence="2">
    <location>
        <begin position="289"/>
        <end position="309"/>
    </location>
</feature>
<feature type="transmembrane region" description="Helical" evidence="2">
    <location>
        <begin position="321"/>
        <end position="341"/>
    </location>
</feature>
<feature type="transmembrane region" description="Helical" evidence="2">
    <location>
        <begin position="348"/>
        <end position="368"/>
    </location>
</feature>
<feature type="binding site" description="axial binding residue" evidence="2">
    <location>
        <position position="84"/>
    </location>
    <ligand>
        <name>heme b</name>
        <dbReference type="ChEBI" id="CHEBI:60344"/>
        <label>b562</label>
    </ligand>
    <ligandPart>
        <name>Fe</name>
        <dbReference type="ChEBI" id="CHEBI:18248"/>
    </ligandPart>
</feature>
<feature type="binding site" description="axial binding residue" evidence="2">
    <location>
        <position position="98"/>
    </location>
    <ligand>
        <name>heme b</name>
        <dbReference type="ChEBI" id="CHEBI:60344"/>
        <label>b566</label>
    </ligand>
    <ligandPart>
        <name>Fe</name>
        <dbReference type="ChEBI" id="CHEBI:18248"/>
    </ligandPart>
</feature>
<feature type="binding site" description="axial binding residue" evidence="2">
    <location>
        <position position="183"/>
    </location>
    <ligand>
        <name>heme b</name>
        <dbReference type="ChEBI" id="CHEBI:60344"/>
        <label>b562</label>
    </ligand>
    <ligandPart>
        <name>Fe</name>
        <dbReference type="ChEBI" id="CHEBI:18248"/>
    </ligandPart>
</feature>
<feature type="binding site" description="axial binding residue" evidence="2">
    <location>
        <position position="197"/>
    </location>
    <ligand>
        <name>heme b</name>
        <dbReference type="ChEBI" id="CHEBI:60344"/>
        <label>b566</label>
    </ligand>
    <ligandPart>
        <name>Fe</name>
        <dbReference type="ChEBI" id="CHEBI:18248"/>
    </ligandPart>
</feature>
<feature type="binding site" evidence="2">
    <location>
        <position position="202"/>
    </location>
    <ligand>
        <name>a ubiquinone</name>
        <dbReference type="ChEBI" id="CHEBI:16389"/>
    </ligand>
</feature>
<proteinExistence type="inferred from homology"/>
<name>CYB_PACTU</name>
<evidence type="ECO:0000250" key="1"/>
<evidence type="ECO:0000250" key="2">
    <source>
        <dbReference type="UniProtKB" id="P00157"/>
    </source>
</evidence>
<evidence type="ECO:0000255" key="3">
    <source>
        <dbReference type="PROSITE-ProRule" id="PRU00967"/>
    </source>
</evidence>
<evidence type="ECO:0000255" key="4">
    <source>
        <dbReference type="PROSITE-ProRule" id="PRU00968"/>
    </source>
</evidence>
<protein>
    <recommendedName>
        <fullName>Cytochrome b</fullName>
    </recommendedName>
    <alternativeName>
        <fullName>Complex III subunit 3</fullName>
    </alternativeName>
    <alternativeName>
        <fullName>Complex III subunit III</fullName>
    </alternativeName>
    <alternativeName>
        <fullName>Cytochrome b-c1 complex subunit 3</fullName>
    </alternativeName>
    <alternativeName>
        <fullName>Ubiquinol-cytochrome-c reductase complex cytochrome b subunit</fullName>
    </alternativeName>
</protein>
<geneLocation type="mitochondrion"/>
<accession>O79216</accession>
<organism>
    <name type="scientific">Pachyptila turtur</name>
    <name type="common">Fairy prion</name>
    <name type="synonym">Procellaria turtur</name>
    <dbReference type="NCBI Taxonomy" id="37059"/>
    <lineage>
        <taxon>Eukaryota</taxon>
        <taxon>Metazoa</taxon>
        <taxon>Chordata</taxon>
        <taxon>Craniata</taxon>
        <taxon>Vertebrata</taxon>
        <taxon>Euteleostomi</taxon>
        <taxon>Archelosauria</taxon>
        <taxon>Archosauria</taxon>
        <taxon>Dinosauria</taxon>
        <taxon>Saurischia</taxon>
        <taxon>Theropoda</taxon>
        <taxon>Coelurosauria</taxon>
        <taxon>Aves</taxon>
        <taxon>Neognathae</taxon>
        <taxon>Neoaves</taxon>
        <taxon>Aequornithes</taxon>
        <taxon>Procellariiformes</taxon>
        <taxon>Procellariidae</taxon>
        <taxon>Pachyptila</taxon>
    </lineage>
</organism>
<reference key="1">
    <citation type="journal article" date="1998" name="Mol. Biol. Evol.">
        <title>Body size effects and rates of cytochrome-b evolution in tube-nosed seabirds.</title>
        <authorList>
            <person name="Nunn G.B."/>
            <person name="Stanley S.E."/>
        </authorList>
    </citation>
    <scope>NUCLEOTIDE SEQUENCE [GENOMIC DNA]</scope>
    <source>
        <strain>Isolate Fprion-MI-1</strain>
    </source>
</reference>
<gene>
    <name type="primary">MT-CYB</name>
    <name type="synonym">COB</name>
    <name type="synonym">CYTB</name>
    <name type="synonym">MTCYB</name>
</gene>
<keyword id="KW-0249">Electron transport</keyword>
<keyword id="KW-0349">Heme</keyword>
<keyword id="KW-0408">Iron</keyword>
<keyword id="KW-0472">Membrane</keyword>
<keyword id="KW-0479">Metal-binding</keyword>
<keyword id="KW-0496">Mitochondrion</keyword>
<keyword id="KW-0999">Mitochondrion inner membrane</keyword>
<keyword id="KW-0679">Respiratory chain</keyword>
<keyword id="KW-0812">Transmembrane</keyword>
<keyword id="KW-1133">Transmembrane helix</keyword>
<keyword id="KW-0813">Transport</keyword>
<keyword id="KW-0830">Ubiquinone</keyword>
<sequence>MAPNLRKSHPLLKMVNNSLIDLPTPSNISSWWNFGSLLGICLMTQILTGLLLAMHYTADTTLAFSSVAHTCRNVQYGWLIRNLHANGASFFFICIYFHIGRGFYYGSYLYKETWNTGVILLLTLMATAFVGYVLPWGQMSFWGATVITNLFSAIPYIGQTLVEWAWGGFSVDNPTLTRFFALHFLLPFLIAGLTLIHLTFLHESGSNNPLGIVSNCDKIPFHPYFTLKDILGFTLMFLPLTTLALFSPNLLGDPENFTPANPLVTPPHIKPEWYFLFAYAILRSIPNKLGGVLALAASVLILFLIPFLHKAKQRTMTFRPISQLLFWILVANLLILTWVGSQPVEHPFIIIGQLASITYFTILLVLFPIIGALENKMLNY</sequence>